<sequence>MTKRLRAEDDFNPVYPYGYARNQNIPFLTPPFVSSNGFQNFPPGVLSLKLADPITINNQNVSLKVGGGLTLQEETGKLTVNTEPPLHLTNNKLGIALDAPFDVIDNKLTLLAGHGLSIITKETSTLPGLVNTLVVLTGKGIGTDLSNNGGNICVRVGEGGGLSFNDNGDLVAFNKKEDKRTLWTTPDTSPNCRIDQDKDSKLSLVLTKCGSQILANVSLIVVAGRYKIINNNTNPALKGFTIKLLFDKNGVLMESSNLGKSYWNFRNQNSIMSTAYEKAIGFMPNLVAYPKPTTGSKKYARDIVYGNIYLGGKPHQPVTIKTTFNQETGCEYSITFDFSWAKTYVNVEFETTSFTFSYIAQE</sequence>
<name>SPIKE_ADE08</name>
<organism>
    <name type="scientific">Human adenovirus D serotype 8</name>
    <name type="common">HAdV-8</name>
    <name type="synonym">Human adenovirus 8</name>
    <dbReference type="NCBI Taxonomy" id="31545"/>
    <lineage>
        <taxon>Viruses</taxon>
        <taxon>Varidnaviria</taxon>
        <taxon>Bamfordvirae</taxon>
        <taxon>Preplasmiviricota</taxon>
        <taxon>Tectiliviricetes</taxon>
        <taxon>Rowavirales</taxon>
        <taxon>Adenoviridae</taxon>
        <taxon>Mastadenovirus</taxon>
        <taxon>Human mastadenovirus D</taxon>
    </lineage>
</organism>
<evidence type="ECO:0000250" key="1"/>
<evidence type="ECO:0000305" key="2"/>
<keyword id="KW-0167">Capsid protein</keyword>
<keyword id="KW-1048">Host nucleus</keyword>
<keyword id="KW-0945">Host-virus interaction</keyword>
<keyword id="KW-0426">Late protein</keyword>
<keyword id="KW-1161">Viral attachment to host cell</keyword>
<keyword id="KW-0946">Virion</keyword>
<keyword id="KW-1160">Virus entry into host cell</keyword>
<reference key="1">
    <citation type="journal article" date="1995" name="Virology">
        <title>Characterization of adenovirus subgenus D fiber genes.</title>
        <authorList>
            <person name="Pring-Akerblom P."/>
            <person name="Adrian T."/>
        </authorList>
    </citation>
    <scope>NUCLEOTIDE SEQUENCE [GENOMIC DNA]</scope>
    <source>
        <strain>Isolate 1127</strain>
    </source>
</reference>
<reference key="2">
    <citation type="journal article" date="2005" name="J. Virol.">
        <title>Adenovirus receptors.</title>
        <authorList>
            <person name="Zhang Y."/>
            <person name="Bergelson J.M."/>
        </authorList>
    </citation>
    <scope>REVIEW</scope>
</reference>
<proteinExistence type="evidence at transcript level"/>
<accession>P36845</accession>
<gene>
    <name type="ORF">L5</name>
</gene>
<organismHost>
    <name type="scientific">Homo sapiens</name>
    <name type="common">Human</name>
    <dbReference type="NCBI Taxonomy" id="9606"/>
</organismHost>
<comment type="function">
    <text>Forms spikes that protrude from each vertex of the icosahedral capsid. Interacts with host sialic acid to provide virion initial attachment to target cell. Fiber proteins are shed during virus entry, when virus is still at the cell surface.</text>
</comment>
<comment type="subunit">
    <text evidence="1">Homotrimer. Interacts with host sialic acid. Interacts (via N-terminal tail region) with pentons (By similarity).</text>
</comment>
<comment type="subcellular location">
    <subcellularLocation>
        <location evidence="1">Virion</location>
    </subcellularLocation>
    <subcellularLocation>
        <location evidence="1">Host nucleus</location>
    </subcellularLocation>
    <text evidence="1">Anchored to the pentons, protrudes from the virion surface.</text>
</comment>
<comment type="induction">
    <text>Expressed in the late phase of the viral replicative cycle.</text>
</comment>
<comment type="domain">
    <text evidence="1">The tail region anchors the fiber to penton base capsomers, whereas the shaft, built from several repeated motifs, allows the knob to protrude from the virion.</text>
</comment>
<comment type="miscellaneous">
    <text evidence="1">All late proteins expressed from the major late promoter are produced by alternative splicing and alternative polyadenylation of the same gene giving rise to non-overlapping ORFs. A leader sequence is present in the N-terminus of all these mRNAs and is recognized by the viral shutoff protein to provide expression although conventional translation via ribosome scanning from the cap has been shut off in the host cell (By similarity).</text>
</comment>
<comment type="similarity">
    <text evidence="2">Belongs to the adenoviridae fiber family.</text>
</comment>
<feature type="chain" id="PRO_0000221791" description="Fiber protein">
    <location>
        <begin position="1"/>
        <end position="362"/>
    </location>
</feature>
<protein>
    <recommendedName>
        <fullName>Fiber protein</fullName>
        <shortName>SPIKE</shortName>
    </recommendedName>
    <alternativeName>
        <fullName>Protein IV</fullName>
    </alternativeName>
</protein>
<dbReference type="EMBL" id="X74660">
    <property type="protein sequence ID" value="CAA52724.1"/>
    <property type="molecule type" value="Genomic_DNA"/>
</dbReference>
<dbReference type="PIR" id="S37218">
    <property type="entry name" value="S37218"/>
</dbReference>
<dbReference type="SMR" id="P36845"/>
<dbReference type="GO" id="GO:0042025">
    <property type="term" value="C:host cell nucleus"/>
    <property type="evidence" value="ECO:0007669"/>
    <property type="project" value="UniProtKB-SubCell"/>
</dbReference>
<dbReference type="GO" id="GO:0019028">
    <property type="term" value="C:viral capsid"/>
    <property type="evidence" value="ECO:0007669"/>
    <property type="project" value="UniProtKB-KW"/>
</dbReference>
<dbReference type="GO" id="GO:0007155">
    <property type="term" value="P:cell adhesion"/>
    <property type="evidence" value="ECO:0007669"/>
    <property type="project" value="InterPro"/>
</dbReference>
<dbReference type="GO" id="GO:0046718">
    <property type="term" value="P:symbiont entry into host cell"/>
    <property type="evidence" value="ECO:0007669"/>
    <property type="project" value="UniProtKB-KW"/>
</dbReference>
<dbReference type="GO" id="GO:0019062">
    <property type="term" value="P:virion attachment to host cell"/>
    <property type="evidence" value="ECO:0007669"/>
    <property type="project" value="UniProtKB-KW"/>
</dbReference>
<dbReference type="Gene3D" id="6.20.10.20">
    <property type="match status" value="1"/>
</dbReference>
<dbReference type="Gene3D" id="2.60.90.10">
    <property type="entry name" value="Adenovirus pIV-related, attachment domain"/>
    <property type="match status" value="1"/>
</dbReference>
<dbReference type="InterPro" id="IPR000931">
    <property type="entry name" value="Adeno_fibre"/>
</dbReference>
<dbReference type="InterPro" id="IPR000978">
    <property type="entry name" value="Adeno_fibre_knob"/>
</dbReference>
<dbReference type="InterPro" id="IPR008982">
    <property type="entry name" value="Adenovirus_pIV-like_att"/>
</dbReference>
<dbReference type="InterPro" id="IPR009013">
    <property type="entry name" value="Attachment_protein_shaft_sf"/>
</dbReference>
<dbReference type="Pfam" id="PF00541">
    <property type="entry name" value="Adeno_knob"/>
    <property type="match status" value="1"/>
</dbReference>
<dbReference type="PRINTS" id="PR00307">
    <property type="entry name" value="ADENOVSFIBRE"/>
</dbReference>
<dbReference type="SUPFAM" id="SSF51225">
    <property type="entry name" value="Fibre shaft of virus attachment proteins"/>
    <property type="match status" value="2"/>
</dbReference>
<dbReference type="SUPFAM" id="SSF49835">
    <property type="entry name" value="Virus attachment protein globular domain"/>
    <property type="match status" value="1"/>
</dbReference>